<name>BPIFC_HUMAN</name>
<evidence type="ECO:0000250" key="1">
    <source>
        <dbReference type="UniProtKB" id="P17213"/>
    </source>
</evidence>
<evidence type="ECO:0000255" key="2"/>
<evidence type="ECO:0000303" key="3">
    <source>
    </source>
</evidence>
<evidence type="ECO:0000305" key="4"/>
<sequence>MCTKTIPVLWGCFLLWNLYVSSSQTIYPGIKARITQRALDYGVQAGMKMIEQMLKEKKLPDLSGSESLEFLKVDYVNYNFSNIKISAFSFPNTSLAFVPGVGIKALTNHGTANISTDWGFESPLFQDTGGADLFLSGVYFTGIIILTRNDFGHPTLKLQDCYAQLSHAHVSFSGELSVLYNSFAEPMEKPILKNLNEMLCPIIASEVKALNANLSTLEVLTKIDNYTLLDYSLISSPEITENYLDLNLKGVFYPLENLTDPPFSPVPFVLPERSNSMLYIGIAEYFFKSASFAHFTAGVFNVTLSTEEISNHFVQNSQGLGNVLSRIAEIYILSQPFMVRIMATEPPIINLQPGNFTLDIPASIMMLTQPKNSTVETIVSMDFVASTSVGLVILGQRLVCSLSLNRFRLALPESNRSNIEVLRFENILSSILHFGVLPLANAKLQQGFPLSNPHKFLFVNSDIEVLEGFLLISTDLKYETSSKQQPSFHVWEGLNLISRQWRGKSAP</sequence>
<accession>Q8NFQ6</accession>
<accession>A2RRF1</accession>
<comment type="subcellular location">
    <subcellularLocation>
        <location evidence="1">Secreted</location>
    </subcellularLocation>
</comment>
<comment type="alternative products">
    <event type="alternative splicing"/>
    <isoform>
        <id>Q8NFQ6-1</id>
        <name>1</name>
        <sequence type="displayed"/>
    </isoform>
    <isoform>
        <id>Q8NFQ6-2</id>
        <name>2</name>
        <sequence type="described" ref="VSP_056033 VSP_056034"/>
    </isoform>
</comment>
<comment type="tissue specificity">
    <text>Detected in the basal layer of the epidermis from inflammatory skin from psoriasis patients, but not in normal skin.</text>
</comment>
<comment type="similarity">
    <text evidence="4">Belongs to the BPI/LBP/Plunc superfamily. BPI/LBP family.</text>
</comment>
<proteinExistence type="evidence at protein level"/>
<protein>
    <recommendedName>
        <fullName>BPI fold-containing family C protein</fullName>
    </recommendedName>
    <alternativeName>
        <fullName>Bactericidal/permeability-increasing protein-like 2</fullName>
        <shortName>BPI-like 2</shortName>
    </alternativeName>
</protein>
<organism>
    <name type="scientific">Homo sapiens</name>
    <name type="common">Human</name>
    <dbReference type="NCBI Taxonomy" id="9606"/>
    <lineage>
        <taxon>Eukaryota</taxon>
        <taxon>Metazoa</taxon>
        <taxon>Chordata</taxon>
        <taxon>Craniata</taxon>
        <taxon>Vertebrata</taxon>
        <taxon>Euteleostomi</taxon>
        <taxon>Mammalia</taxon>
        <taxon>Eutheria</taxon>
        <taxon>Euarchontoglires</taxon>
        <taxon>Primates</taxon>
        <taxon>Haplorrhini</taxon>
        <taxon>Catarrhini</taxon>
        <taxon>Hominidae</taxon>
        <taxon>Homo</taxon>
    </lineage>
</organism>
<gene>
    <name type="primary">BPIFC</name>
    <name type="synonym">BPIL2</name>
</gene>
<reference key="1">
    <citation type="journal article" date="2002" name="Immunogenetics">
        <title>Three new human members of the lipid transfer/lipopolysaccharide binding protein family (LT/LBP).</title>
        <authorList>
            <person name="Mulero J.J."/>
            <person name="Boyle B.J."/>
            <person name="Bradley S."/>
            <person name="Bright J.M."/>
            <person name="Nelken S.T."/>
            <person name="Ho T.T."/>
            <person name="Mize N.K."/>
            <person name="Childs J.D."/>
            <person name="Ballinger D.G."/>
            <person name="Ford J.E."/>
            <person name="Rupp F."/>
        </authorList>
    </citation>
    <scope>NUCLEOTIDE SEQUENCE [MRNA] (ISOFORM 1)</scope>
    <source>
        <tissue>Fetal skin</tissue>
    </source>
</reference>
<reference key="2">
    <citation type="journal article" date="1999" name="Nature">
        <title>The DNA sequence of human chromosome 22.</title>
        <authorList>
            <person name="Dunham I."/>
            <person name="Hunt A.R."/>
            <person name="Collins J.E."/>
            <person name="Bruskiewich R."/>
            <person name="Beare D.M."/>
            <person name="Clamp M."/>
            <person name="Smink L.J."/>
            <person name="Ainscough R."/>
            <person name="Almeida J.P."/>
            <person name="Babbage A.K."/>
            <person name="Bagguley C."/>
            <person name="Bailey J."/>
            <person name="Barlow K.F."/>
            <person name="Bates K.N."/>
            <person name="Beasley O.P."/>
            <person name="Bird C.P."/>
            <person name="Blakey S.E."/>
            <person name="Bridgeman A.M."/>
            <person name="Buck D."/>
            <person name="Burgess J."/>
            <person name="Burrill W.D."/>
            <person name="Burton J."/>
            <person name="Carder C."/>
            <person name="Carter N.P."/>
            <person name="Chen Y."/>
            <person name="Clark G."/>
            <person name="Clegg S.M."/>
            <person name="Cobley V.E."/>
            <person name="Cole C.G."/>
            <person name="Collier R.E."/>
            <person name="Connor R."/>
            <person name="Conroy D."/>
            <person name="Corby N.R."/>
            <person name="Coville G.J."/>
            <person name="Cox A.V."/>
            <person name="Davis J."/>
            <person name="Dawson E."/>
            <person name="Dhami P.D."/>
            <person name="Dockree C."/>
            <person name="Dodsworth S.J."/>
            <person name="Durbin R.M."/>
            <person name="Ellington A.G."/>
            <person name="Evans K.L."/>
            <person name="Fey J.M."/>
            <person name="Fleming K."/>
            <person name="French L."/>
            <person name="Garner A.A."/>
            <person name="Gilbert J.G.R."/>
            <person name="Goward M.E."/>
            <person name="Grafham D.V."/>
            <person name="Griffiths M.N.D."/>
            <person name="Hall C."/>
            <person name="Hall R.E."/>
            <person name="Hall-Tamlyn G."/>
            <person name="Heathcott R.W."/>
            <person name="Ho S."/>
            <person name="Holmes S."/>
            <person name="Hunt S.E."/>
            <person name="Jones M.C."/>
            <person name="Kershaw J."/>
            <person name="Kimberley A.M."/>
            <person name="King A."/>
            <person name="Laird G.K."/>
            <person name="Langford C.F."/>
            <person name="Leversha M.A."/>
            <person name="Lloyd C."/>
            <person name="Lloyd D.M."/>
            <person name="Martyn I.D."/>
            <person name="Mashreghi-Mohammadi M."/>
            <person name="Matthews L.H."/>
            <person name="Mccann O.T."/>
            <person name="Mcclay J."/>
            <person name="Mclaren S."/>
            <person name="McMurray A.A."/>
            <person name="Milne S.A."/>
            <person name="Mortimore B.J."/>
            <person name="Odell C.N."/>
            <person name="Pavitt R."/>
            <person name="Pearce A.V."/>
            <person name="Pearson D."/>
            <person name="Phillimore B.J.C.T."/>
            <person name="Phillips S.H."/>
            <person name="Plumb R.W."/>
            <person name="Ramsay H."/>
            <person name="Ramsey Y."/>
            <person name="Rogers L."/>
            <person name="Ross M.T."/>
            <person name="Scott C.E."/>
            <person name="Sehra H.K."/>
            <person name="Skuce C.D."/>
            <person name="Smalley S."/>
            <person name="Smith M.L."/>
            <person name="Soderlund C."/>
            <person name="Spragon L."/>
            <person name="Steward C.A."/>
            <person name="Sulston J.E."/>
            <person name="Swann R.M."/>
            <person name="Vaudin M."/>
            <person name="Wall M."/>
            <person name="Wallis J.M."/>
            <person name="Whiteley M.N."/>
            <person name="Willey D.L."/>
            <person name="Williams L."/>
            <person name="Williams S.A."/>
            <person name="Williamson H."/>
            <person name="Wilmer T.E."/>
            <person name="Wilming L."/>
            <person name="Wright C.L."/>
            <person name="Hubbard T."/>
            <person name="Bentley D.R."/>
            <person name="Beck S."/>
            <person name="Rogers J."/>
            <person name="Shimizu N."/>
            <person name="Minoshima S."/>
            <person name="Kawasaki K."/>
            <person name="Sasaki T."/>
            <person name="Asakawa S."/>
            <person name="Kudoh J."/>
            <person name="Shintani A."/>
            <person name="Shibuya K."/>
            <person name="Yoshizaki Y."/>
            <person name="Aoki N."/>
            <person name="Mitsuyama S."/>
            <person name="Roe B.A."/>
            <person name="Chen F."/>
            <person name="Chu L."/>
            <person name="Crabtree J."/>
            <person name="Deschamps S."/>
            <person name="Do A."/>
            <person name="Do T."/>
            <person name="Dorman A."/>
            <person name="Fang F."/>
            <person name="Fu Y."/>
            <person name="Hu P."/>
            <person name="Hua A."/>
            <person name="Kenton S."/>
            <person name="Lai H."/>
            <person name="Lao H.I."/>
            <person name="Lewis J."/>
            <person name="Lewis S."/>
            <person name="Lin S.-P."/>
            <person name="Loh P."/>
            <person name="Malaj E."/>
            <person name="Nguyen T."/>
            <person name="Pan H."/>
            <person name="Phan S."/>
            <person name="Qi S."/>
            <person name="Qian Y."/>
            <person name="Ray L."/>
            <person name="Ren Q."/>
            <person name="Shaull S."/>
            <person name="Sloan D."/>
            <person name="Song L."/>
            <person name="Wang Q."/>
            <person name="Wang Y."/>
            <person name="Wang Z."/>
            <person name="White J."/>
            <person name="Willingham D."/>
            <person name="Wu H."/>
            <person name="Yao Z."/>
            <person name="Zhan M."/>
            <person name="Zhang G."/>
            <person name="Chissoe S."/>
            <person name="Murray J."/>
            <person name="Miller N."/>
            <person name="Minx P."/>
            <person name="Fulton R."/>
            <person name="Johnson D."/>
            <person name="Bemis G."/>
            <person name="Bentley D."/>
            <person name="Bradshaw H."/>
            <person name="Bourne S."/>
            <person name="Cordes M."/>
            <person name="Du Z."/>
            <person name="Fulton L."/>
            <person name="Goela D."/>
            <person name="Graves T."/>
            <person name="Hawkins J."/>
            <person name="Hinds K."/>
            <person name="Kemp K."/>
            <person name="Latreille P."/>
            <person name="Layman D."/>
            <person name="Ozersky P."/>
            <person name="Rohlfing T."/>
            <person name="Scheet P."/>
            <person name="Walker C."/>
            <person name="Wamsley A."/>
            <person name="Wohldmann P."/>
            <person name="Pepin K."/>
            <person name="Nelson J."/>
            <person name="Korf I."/>
            <person name="Bedell J.A."/>
            <person name="Hillier L.W."/>
            <person name="Mardis E."/>
            <person name="Waterston R."/>
            <person name="Wilson R."/>
            <person name="Emanuel B.S."/>
            <person name="Shaikh T."/>
            <person name="Kurahashi H."/>
            <person name="Saitta S."/>
            <person name="Budarf M.L."/>
            <person name="McDermid H.E."/>
            <person name="Johnson A."/>
            <person name="Wong A.C.C."/>
            <person name="Morrow B.E."/>
            <person name="Edelmann L."/>
            <person name="Kim U.J."/>
            <person name="Shizuya H."/>
            <person name="Simon M.I."/>
            <person name="Dumanski J.P."/>
            <person name="Peyrard M."/>
            <person name="Kedra D."/>
            <person name="Seroussi E."/>
            <person name="Fransson I."/>
            <person name="Tapia I."/>
            <person name="Bruder C.E."/>
            <person name="O'Brien K.P."/>
            <person name="Wilkinson P."/>
            <person name="Bodenteich A."/>
            <person name="Hartman K."/>
            <person name="Hu X."/>
            <person name="Khan A.S."/>
            <person name="Lane L."/>
            <person name="Tilahun Y."/>
            <person name="Wright H."/>
        </authorList>
    </citation>
    <scope>NUCLEOTIDE SEQUENCE [LARGE SCALE GENOMIC DNA]</scope>
</reference>
<reference key="3">
    <citation type="journal article" date="2004" name="Genome Res.">
        <title>The status, quality, and expansion of the NIH full-length cDNA project: the Mammalian Gene Collection (MGC).</title>
        <authorList>
            <consortium name="The MGC Project Team"/>
        </authorList>
    </citation>
    <scope>NUCLEOTIDE SEQUENCE [LARGE SCALE MRNA] (ISOFORM 2)</scope>
</reference>
<feature type="signal peptide" evidence="2">
    <location>
        <begin position="1"/>
        <end position="23"/>
    </location>
</feature>
<feature type="chain" id="PRO_0000017166" description="BPI fold-containing family C protein">
    <location>
        <begin position="24"/>
        <end position="507"/>
    </location>
</feature>
<feature type="glycosylation site" description="N-linked (GlcNAc...) asparagine" evidence="2">
    <location>
        <position position="79"/>
    </location>
</feature>
<feature type="glycosylation site" description="N-linked (GlcNAc...) asparagine" evidence="2">
    <location>
        <position position="92"/>
    </location>
</feature>
<feature type="glycosylation site" description="N-linked (GlcNAc...) asparagine" evidence="2">
    <location>
        <position position="113"/>
    </location>
</feature>
<feature type="glycosylation site" description="N-linked (GlcNAc...) asparagine" evidence="2">
    <location>
        <position position="213"/>
    </location>
</feature>
<feature type="glycosylation site" description="N-linked (GlcNAc...) asparagine" evidence="2">
    <location>
        <position position="225"/>
    </location>
</feature>
<feature type="glycosylation site" description="N-linked (GlcNAc...) asparagine" evidence="2">
    <location>
        <position position="257"/>
    </location>
</feature>
<feature type="glycosylation site" description="N-linked (GlcNAc...) asparagine" evidence="2">
    <location>
        <position position="301"/>
    </location>
</feature>
<feature type="glycosylation site" description="N-linked (GlcNAc...) asparagine" evidence="2">
    <location>
        <position position="355"/>
    </location>
</feature>
<feature type="glycosylation site" description="N-linked (GlcNAc...) asparagine" evidence="2">
    <location>
        <position position="372"/>
    </location>
</feature>
<feature type="glycosylation site" description="N-linked (GlcNAc...) asparagine" evidence="2">
    <location>
        <position position="415"/>
    </location>
</feature>
<feature type="disulfide bond" evidence="1">
    <location>
        <begin position="161"/>
        <end position="200"/>
    </location>
</feature>
<feature type="splice variant" id="VSP_056033" description="In isoform 2." evidence="3">
    <location>
        <begin position="1"/>
        <end position="186"/>
    </location>
</feature>
<feature type="splice variant" id="VSP_056034" description="In isoform 2." evidence="3">
    <location>
        <begin position="327"/>
        <end position="383"/>
    </location>
</feature>
<feature type="sequence variant" id="VAR_024516" description="In dbSNP:rs2076051.">
    <original>V</original>
    <variation>A</variation>
    <location>
        <position position="269"/>
    </location>
</feature>
<feature type="sequence variant" id="VAR_033631" description="In dbSNP:rs5994570.">
    <original>V</original>
    <variation>L</variation>
    <location>
        <position position="302"/>
    </location>
</feature>
<feature type="sequence variant" id="VAR_024517" description="In dbSNP:rs5998478.">
    <original>S</original>
    <variation>P</variation>
    <location>
        <position position="451"/>
    </location>
</feature>
<feature type="sequence variant" id="VAR_049741" description="In dbSNP:rs35856742.">
    <original>E</original>
    <variation>A</variation>
    <location>
        <position position="479"/>
    </location>
</feature>
<keyword id="KW-0025">Alternative splicing</keyword>
<keyword id="KW-1015">Disulfide bond</keyword>
<keyword id="KW-0325">Glycoprotein</keyword>
<keyword id="KW-0391">Immunity</keyword>
<keyword id="KW-0399">Innate immunity</keyword>
<keyword id="KW-1267">Proteomics identification</keyword>
<keyword id="KW-1185">Reference proteome</keyword>
<keyword id="KW-0964">Secreted</keyword>
<keyword id="KW-0732">Signal</keyword>
<dbReference type="EMBL" id="AF465766">
    <property type="protein sequence ID" value="AAM73984.1"/>
    <property type="molecule type" value="mRNA"/>
</dbReference>
<dbReference type="EMBL" id="AL021937">
    <property type="status" value="NOT_ANNOTATED_CDS"/>
    <property type="molecule type" value="Genomic_DNA"/>
</dbReference>
<dbReference type="EMBL" id="BC131582">
    <property type="protein sequence ID" value="AAI31583.1"/>
    <property type="molecule type" value="mRNA"/>
</dbReference>
<dbReference type="CCDS" id="CCDS13906.1">
    <molecule id="Q8NFQ6-1"/>
</dbReference>
<dbReference type="RefSeq" id="NP_777592.1">
    <molecule id="Q8NFQ6-1"/>
    <property type="nucleotide sequence ID" value="NM_174932.3"/>
</dbReference>
<dbReference type="RefSeq" id="XP_011528390.1">
    <property type="nucleotide sequence ID" value="XM_011530088.2"/>
</dbReference>
<dbReference type="RefSeq" id="XP_011528391.1">
    <molecule id="Q8NFQ6-1"/>
    <property type="nucleotide sequence ID" value="XM_011530089.2"/>
</dbReference>
<dbReference type="RefSeq" id="XP_011528392.1">
    <molecule id="Q8NFQ6-1"/>
    <property type="nucleotide sequence ID" value="XM_011530090.2"/>
</dbReference>
<dbReference type="SMR" id="Q8NFQ6"/>
<dbReference type="BioGRID" id="129024">
    <property type="interactions" value="3"/>
</dbReference>
<dbReference type="FunCoup" id="Q8NFQ6">
    <property type="interactions" value="29"/>
</dbReference>
<dbReference type="IntAct" id="Q8NFQ6">
    <property type="interactions" value="2"/>
</dbReference>
<dbReference type="STRING" id="9606.ENSP00000380594"/>
<dbReference type="GlyCosmos" id="Q8NFQ6">
    <property type="glycosylation" value="10 sites, No reported glycans"/>
</dbReference>
<dbReference type="GlyGen" id="Q8NFQ6">
    <property type="glycosylation" value="10 sites, 1 N-linked glycan (1 site)"/>
</dbReference>
<dbReference type="iPTMnet" id="Q8NFQ6"/>
<dbReference type="PhosphoSitePlus" id="Q8NFQ6"/>
<dbReference type="BioMuta" id="BPIFC"/>
<dbReference type="DMDM" id="34395538"/>
<dbReference type="jPOST" id="Q8NFQ6"/>
<dbReference type="MassIVE" id="Q8NFQ6"/>
<dbReference type="PaxDb" id="9606-ENSP00000380594"/>
<dbReference type="PeptideAtlas" id="Q8NFQ6"/>
<dbReference type="ProteomicsDB" id="465"/>
<dbReference type="ProteomicsDB" id="73336">
    <molecule id="Q8NFQ6-1"/>
</dbReference>
<dbReference type="Antibodypedia" id="45522">
    <property type="antibodies" value="56 antibodies from 9 providers"/>
</dbReference>
<dbReference type="DNASU" id="254240"/>
<dbReference type="Ensembl" id="ENST00000300399.9">
    <molecule id="Q8NFQ6-1"/>
    <property type="protein sequence ID" value="ENSP00000300399.3"/>
    <property type="gene ID" value="ENSG00000184459.10"/>
</dbReference>
<dbReference type="Ensembl" id="ENST00000397452.5">
    <molecule id="Q8NFQ6-1"/>
    <property type="protein sequence ID" value="ENSP00000380594.1"/>
    <property type="gene ID" value="ENSG00000184459.10"/>
</dbReference>
<dbReference type="GeneID" id="254240"/>
<dbReference type="KEGG" id="hsa:254240"/>
<dbReference type="MANE-Select" id="ENST00000300399.9">
    <property type="protein sequence ID" value="ENSP00000300399.3"/>
    <property type="RefSeq nucleotide sequence ID" value="NM_174932.3"/>
    <property type="RefSeq protein sequence ID" value="NP_777592.1"/>
</dbReference>
<dbReference type="UCSC" id="uc003amn.2">
    <molecule id="Q8NFQ6-1"/>
    <property type="organism name" value="human"/>
</dbReference>
<dbReference type="AGR" id="HGNC:16503"/>
<dbReference type="CTD" id="254240"/>
<dbReference type="DisGeNET" id="254240"/>
<dbReference type="GeneCards" id="BPIFC"/>
<dbReference type="HGNC" id="HGNC:16503">
    <property type="gene designation" value="BPIFC"/>
</dbReference>
<dbReference type="HPA" id="ENSG00000184459">
    <property type="expression patterns" value="Tissue enriched (skin)"/>
</dbReference>
<dbReference type="MIM" id="614109">
    <property type="type" value="gene"/>
</dbReference>
<dbReference type="neXtProt" id="NX_Q8NFQ6"/>
<dbReference type="OpenTargets" id="ENSG00000184459"/>
<dbReference type="PharmGKB" id="PA25405"/>
<dbReference type="VEuPathDB" id="HostDB:ENSG00000184459"/>
<dbReference type="eggNOG" id="KOG4160">
    <property type="taxonomic scope" value="Eukaryota"/>
</dbReference>
<dbReference type="GeneTree" id="ENSGT01130000278326"/>
<dbReference type="HOGENOM" id="CLU_028970_3_0_1"/>
<dbReference type="InParanoid" id="Q8NFQ6"/>
<dbReference type="OMA" id="TEPPMIN"/>
<dbReference type="OrthoDB" id="9938407at2759"/>
<dbReference type="PAN-GO" id="Q8NFQ6">
    <property type="GO annotations" value="1 GO annotation based on evolutionary models"/>
</dbReference>
<dbReference type="PhylomeDB" id="Q8NFQ6"/>
<dbReference type="TreeFam" id="TF315617"/>
<dbReference type="PathwayCommons" id="Q8NFQ6"/>
<dbReference type="BioGRID-ORCS" id="254240">
    <property type="hits" value="17 hits in 1143 CRISPR screens"/>
</dbReference>
<dbReference type="ChiTaRS" id="BPIFC">
    <property type="organism name" value="human"/>
</dbReference>
<dbReference type="GenomeRNAi" id="254240"/>
<dbReference type="Pharos" id="Q8NFQ6">
    <property type="development level" value="Tdark"/>
</dbReference>
<dbReference type="PRO" id="PR:Q8NFQ6"/>
<dbReference type="Proteomes" id="UP000005640">
    <property type="component" value="Chromosome 22"/>
</dbReference>
<dbReference type="RNAct" id="Q8NFQ6">
    <property type="molecule type" value="protein"/>
</dbReference>
<dbReference type="Bgee" id="ENSG00000184459">
    <property type="expression patterns" value="Expressed in upper leg skin and 59 other cell types or tissues"/>
</dbReference>
<dbReference type="ExpressionAtlas" id="Q8NFQ6">
    <property type="expression patterns" value="baseline and differential"/>
</dbReference>
<dbReference type="GO" id="GO:0005615">
    <property type="term" value="C:extracellular space"/>
    <property type="evidence" value="ECO:0000318"/>
    <property type="project" value="GO_Central"/>
</dbReference>
<dbReference type="GO" id="GO:0001530">
    <property type="term" value="F:lipopolysaccharide binding"/>
    <property type="evidence" value="ECO:0000303"/>
    <property type="project" value="UniProtKB"/>
</dbReference>
<dbReference type="GO" id="GO:0005543">
    <property type="term" value="F:phospholipid binding"/>
    <property type="evidence" value="ECO:0000303"/>
    <property type="project" value="UniProtKB"/>
</dbReference>
<dbReference type="GO" id="GO:0045087">
    <property type="term" value="P:innate immune response"/>
    <property type="evidence" value="ECO:0007669"/>
    <property type="project" value="UniProtKB-KW"/>
</dbReference>
<dbReference type="FunFam" id="3.15.20.10:FF:000001">
    <property type="entry name" value="Phospholipid transfer protein"/>
    <property type="match status" value="1"/>
</dbReference>
<dbReference type="FunFam" id="3.15.10.10:FF:000001">
    <property type="entry name" value="phospholipid transfer protein-like"/>
    <property type="match status" value="1"/>
</dbReference>
<dbReference type="Gene3D" id="3.15.10.10">
    <property type="entry name" value="Bactericidal permeability-increasing protein, domain 1"/>
    <property type="match status" value="1"/>
</dbReference>
<dbReference type="Gene3D" id="3.15.20.10">
    <property type="entry name" value="Bactericidal permeability-increasing protein, domain 2"/>
    <property type="match status" value="1"/>
</dbReference>
<dbReference type="InterPro" id="IPR017943">
    <property type="entry name" value="Bactericidal_perm-incr_a/b_dom"/>
</dbReference>
<dbReference type="InterPro" id="IPR030675">
    <property type="entry name" value="BPI/LBP"/>
</dbReference>
<dbReference type="InterPro" id="IPR032942">
    <property type="entry name" value="BPI/LBP/Plunc"/>
</dbReference>
<dbReference type="InterPro" id="IPR001124">
    <property type="entry name" value="Lipid-bd_serum_glycop_C"/>
</dbReference>
<dbReference type="InterPro" id="IPR017954">
    <property type="entry name" value="Lipid-bd_serum_glycop_CS"/>
</dbReference>
<dbReference type="InterPro" id="IPR017942">
    <property type="entry name" value="Lipid-bd_serum_glycop_N"/>
</dbReference>
<dbReference type="PANTHER" id="PTHR10504">
    <property type="entry name" value="BACTERICIDAL PERMEABILITY-INCREASING BPI PROTEIN-RELATED"/>
    <property type="match status" value="1"/>
</dbReference>
<dbReference type="PANTHER" id="PTHR10504:SF17">
    <property type="entry name" value="BPI FOLD-CONTAINING FAMILY C PROTEIN"/>
    <property type="match status" value="1"/>
</dbReference>
<dbReference type="Pfam" id="PF01273">
    <property type="entry name" value="LBP_BPI_CETP"/>
    <property type="match status" value="1"/>
</dbReference>
<dbReference type="Pfam" id="PF02886">
    <property type="entry name" value="LBP_BPI_CETP_C"/>
    <property type="match status" value="1"/>
</dbReference>
<dbReference type="PIRSF" id="PIRSF002417">
    <property type="entry name" value="Lipid_binding_protein"/>
    <property type="match status" value="1"/>
</dbReference>
<dbReference type="SMART" id="SM00328">
    <property type="entry name" value="BPI1"/>
    <property type="match status" value="1"/>
</dbReference>
<dbReference type="SMART" id="SM00329">
    <property type="entry name" value="BPI2"/>
    <property type="match status" value="1"/>
</dbReference>
<dbReference type="SUPFAM" id="SSF55394">
    <property type="entry name" value="Bactericidal permeability-increasing protein, BPI"/>
    <property type="match status" value="2"/>
</dbReference>
<dbReference type="PROSITE" id="PS00400">
    <property type="entry name" value="LBP_BPI_CETP"/>
    <property type="match status" value="1"/>
</dbReference>